<comment type="function">
    <text evidence="1">Specifically methylates position 2 of adenine 2503 in 23S rRNA and position 2 of adenine 37 in tRNAs. m2A2503 modification seems to play a crucial role in the proofreading step occurring at the peptidyl transferase center and thus would serve to optimize ribosomal fidelity.</text>
</comment>
<comment type="catalytic activity">
    <reaction evidence="1">
        <text>adenosine(2503) in 23S rRNA + 2 reduced [2Fe-2S]-[ferredoxin] + 2 S-adenosyl-L-methionine = 2-methyladenosine(2503) in 23S rRNA + 5'-deoxyadenosine + L-methionine + 2 oxidized [2Fe-2S]-[ferredoxin] + S-adenosyl-L-homocysteine</text>
        <dbReference type="Rhea" id="RHEA:42916"/>
        <dbReference type="Rhea" id="RHEA-COMP:10000"/>
        <dbReference type="Rhea" id="RHEA-COMP:10001"/>
        <dbReference type="Rhea" id="RHEA-COMP:10152"/>
        <dbReference type="Rhea" id="RHEA-COMP:10282"/>
        <dbReference type="ChEBI" id="CHEBI:17319"/>
        <dbReference type="ChEBI" id="CHEBI:33737"/>
        <dbReference type="ChEBI" id="CHEBI:33738"/>
        <dbReference type="ChEBI" id="CHEBI:57844"/>
        <dbReference type="ChEBI" id="CHEBI:57856"/>
        <dbReference type="ChEBI" id="CHEBI:59789"/>
        <dbReference type="ChEBI" id="CHEBI:74411"/>
        <dbReference type="ChEBI" id="CHEBI:74497"/>
        <dbReference type="EC" id="2.1.1.192"/>
    </reaction>
</comment>
<comment type="catalytic activity">
    <reaction evidence="1">
        <text>adenosine(37) in tRNA + 2 reduced [2Fe-2S]-[ferredoxin] + 2 S-adenosyl-L-methionine = 2-methyladenosine(37) in tRNA + 5'-deoxyadenosine + L-methionine + 2 oxidized [2Fe-2S]-[ferredoxin] + S-adenosyl-L-homocysteine</text>
        <dbReference type="Rhea" id="RHEA:43332"/>
        <dbReference type="Rhea" id="RHEA-COMP:10000"/>
        <dbReference type="Rhea" id="RHEA-COMP:10001"/>
        <dbReference type="Rhea" id="RHEA-COMP:10162"/>
        <dbReference type="Rhea" id="RHEA-COMP:10485"/>
        <dbReference type="ChEBI" id="CHEBI:17319"/>
        <dbReference type="ChEBI" id="CHEBI:33737"/>
        <dbReference type="ChEBI" id="CHEBI:33738"/>
        <dbReference type="ChEBI" id="CHEBI:57844"/>
        <dbReference type="ChEBI" id="CHEBI:57856"/>
        <dbReference type="ChEBI" id="CHEBI:59789"/>
        <dbReference type="ChEBI" id="CHEBI:74411"/>
        <dbReference type="ChEBI" id="CHEBI:74497"/>
        <dbReference type="EC" id="2.1.1.192"/>
    </reaction>
</comment>
<comment type="cofactor">
    <cofactor evidence="1">
        <name>[4Fe-4S] cluster</name>
        <dbReference type="ChEBI" id="CHEBI:49883"/>
    </cofactor>
    <text evidence="1">Binds 1 [4Fe-4S] cluster. The cluster is coordinated with 3 cysteines and an exchangeable S-adenosyl-L-methionine.</text>
</comment>
<comment type="subcellular location">
    <subcellularLocation>
        <location evidence="1">Cytoplasm</location>
    </subcellularLocation>
</comment>
<comment type="miscellaneous">
    <text evidence="1">Reaction proceeds by a ping-pong mechanism involving intermediate methylation of a conserved cysteine residue.</text>
</comment>
<comment type="similarity">
    <text evidence="1">Belongs to the radical SAM superfamily. RlmN family.</text>
</comment>
<sequence>MNLLDLDRQALKRLFADLGEKPFRATQVLKWVHQRRVTGFEEMTDISKALRARLAERVALRLPEVLAEQVSEDGTRKWLLRVDGGQAIETVFIPDSGRGTLCVSSQVGCALDCSFCSTAQQGFNRNLSTAEIIGQYYVAYDQLTGTGEQITNVVFMGMGEPLLNLEAVIPAVRLMTDDDAYGLSKRKVTISTSGVVTMLERMREQTDVSLAVSLHAPNNALRDELVPINRKHPLERLIPACAAYIADKPHRRITWEYVMLDGVNDQDHHAHELARLLGDIPSKVNLIPFNPFPGARYRCSPRGRILRFVRILQSHGLTATTRVTRGQDIDGACGQLVGKVQDRTRRQQRLVQRELRREGR</sequence>
<feature type="chain" id="PRO_0000350009" description="Dual-specificity RNA methyltransferase RlmN">
    <location>
        <begin position="1"/>
        <end position="360"/>
    </location>
</feature>
<feature type="domain" description="Radical SAM core" evidence="2">
    <location>
        <begin position="95"/>
        <end position="330"/>
    </location>
</feature>
<feature type="active site" description="Proton acceptor" evidence="1">
    <location>
        <position position="89"/>
    </location>
</feature>
<feature type="active site" description="S-methylcysteine intermediate" evidence="1">
    <location>
        <position position="333"/>
    </location>
</feature>
<feature type="binding site" evidence="1">
    <location>
        <position position="109"/>
    </location>
    <ligand>
        <name>[4Fe-4S] cluster</name>
        <dbReference type="ChEBI" id="CHEBI:49883"/>
        <note>4Fe-4S-S-AdoMet</note>
    </ligand>
</feature>
<feature type="binding site" evidence="1">
    <location>
        <position position="113"/>
    </location>
    <ligand>
        <name>[4Fe-4S] cluster</name>
        <dbReference type="ChEBI" id="CHEBI:49883"/>
        <note>4Fe-4S-S-AdoMet</note>
    </ligand>
</feature>
<feature type="binding site" evidence="1">
    <location>
        <position position="116"/>
    </location>
    <ligand>
        <name>[4Fe-4S] cluster</name>
        <dbReference type="ChEBI" id="CHEBI:49883"/>
        <note>4Fe-4S-S-AdoMet</note>
    </ligand>
</feature>
<feature type="binding site" evidence="1">
    <location>
        <begin position="159"/>
        <end position="160"/>
    </location>
    <ligand>
        <name>S-adenosyl-L-methionine</name>
        <dbReference type="ChEBI" id="CHEBI:59789"/>
    </ligand>
</feature>
<feature type="binding site" evidence="1">
    <location>
        <position position="191"/>
    </location>
    <ligand>
        <name>S-adenosyl-L-methionine</name>
        <dbReference type="ChEBI" id="CHEBI:59789"/>
    </ligand>
</feature>
<feature type="binding site" evidence="1">
    <location>
        <begin position="213"/>
        <end position="215"/>
    </location>
    <ligand>
        <name>S-adenosyl-L-methionine</name>
        <dbReference type="ChEBI" id="CHEBI:59789"/>
    </ligand>
</feature>
<feature type="binding site" evidence="1">
    <location>
        <position position="290"/>
    </location>
    <ligand>
        <name>S-adenosyl-L-methionine</name>
        <dbReference type="ChEBI" id="CHEBI:59789"/>
    </ligand>
</feature>
<feature type="disulfide bond" description="(transient)" evidence="1">
    <location>
        <begin position="102"/>
        <end position="333"/>
    </location>
</feature>
<keyword id="KW-0004">4Fe-4S</keyword>
<keyword id="KW-0963">Cytoplasm</keyword>
<keyword id="KW-1015">Disulfide bond</keyword>
<keyword id="KW-0408">Iron</keyword>
<keyword id="KW-0411">Iron-sulfur</keyword>
<keyword id="KW-0479">Metal-binding</keyword>
<keyword id="KW-0489">Methyltransferase</keyword>
<keyword id="KW-1185">Reference proteome</keyword>
<keyword id="KW-0698">rRNA processing</keyword>
<keyword id="KW-0949">S-adenosyl-L-methionine</keyword>
<keyword id="KW-0808">Transferase</keyword>
<keyword id="KW-0819">tRNA processing</keyword>
<name>RLMN_ALKEH</name>
<accession>Q0A989</accession>
<organism>
    <name type="scientific">Alkalilimnicola ehrlichii (strain ATCC BAA-1101 / DSM 17681 / MLHE-1)</name>
    <dbReference type="NCBI Taxonomy" id="187272"/>
    <lineage>
        <taxon>Bacteria</taxon>
        <taxon>Pseudomonadati</taxon>
        <taxon>Pseudomonadota</taxon>
        <taxon>Gammaproteobacteria</taxon>
        <taxon>Chromatiales</taxon>
        <taxon>Ectothiorhodospiraceae</taxon>
        <taxon>Alkalilimnicola</taxon>
    </lineage>
</organism>
<proteinExistence type="inferred from homology"/>
<reference key="1">
    <citation type="submission" date="2006-08" db="EMBL/GenBank/DDBJ databases">
        <title>Complete sequence of Alkalilimnicola ehrilichei MLHE-1.</title>
        <authorList>
            <person name="Copeland A."/>
            <person name="Lucas S."/>
            <person name="Lapidus A."/>
            <person name="Barry K."/>
            <person name="Detter J.C."/>
            <person name="Glavina del Rio T."/>
            <person name="Hammon N."/>
            <person name="Israni S."/>
            <person name="Dalin E."/>
            <person name="Tice H."/>
            <person name="Pitluck S."/>
            <person name="Sims D."/>
            <person name="Brettin T."/>
            <person name="Bruce D."/>
            <person name="Han C."/>
            <person name="Tapia R."/>
            <person name="Gilna P."/>
            <person name="Schmutz J."/>
            <person name="Larimer F."/>
            <person name="Land M."/>
            <person name="Hauser L."/>
            <person name="Kyrpides N."/>
            <person name="Mikhailova N."/>
            <person name="Oremland R.S."/>
            <person name="Hoeft S.E."/>
            <person name="Switzer-Blum J."/>
            <person name="Kulp T."/>
            <person name="King G."/>
            <person name="Tabita R."/>
            <person name="Witte B."/>
            <person name="Santini J.M."/>
            <person name="Basu P."/>
            <person name="Hollibaugh J.T."/>
            <person name="Xie G."/>
            <person name="Stolz J.F."/>
            <person name="Richardson P."/>
        </authorList>
    </citation>
    <scope>NUCLEOTIDE SEQUENCE [LARGE SCALE GENOMIC DNA]</scope>
    <source>
        <strain>ATCC BAA-1101 / DSM 17681 / MLHE-1</strain>
    </source>
</reference>
<evidence type="ECO:0000255" key="1">
    <source>
        <dbReference type="HAMAP-Rule" id="MF_01849"/>
    </source>
</evidence>
<evidence type="ECO:0000255" key="2">
    <source>
        <dbReference type="PROSITE-ProRule" id="PRU01266"/>
    </source>
</evidence>
<dbReference type="EC" id="2.1.1.192" evidence="1"/>
<dbReference type="EMBL" id="CP000453">
    <property type="protein sequence ID" value="ABI56598.1"/>
    <property type="molecule type" value="Genomic_DNA"/>
</dbReference>
<dbReference type="SMR" id="Q0A989"/>
<dbReference type="KEGG" id="aeh:Mlg_1249"/>
<dbReference type="eggNOG" id="COG0820">
    <property type="taxonomic scope" value="Bacteria"/>
</dbReference>
<dbReference type="HOGENOM" id="CLU_029101_0_0_6"/>
<dbReference type="Proteomes" id="UP000001962">
    <property type="component" value="Chromosome"/>
</dbReference>
<dbReference type="GO" id="GO:0005737">
    <property type="term" value="C:cytoplasm"/>
    <property type="evidence" value="ECO:0007669"/>
    <property type="project" value="UniProtKB-SubCell"/>
</dbReference>
<dbReference type="GO" id="GO:0051539">
    <property type="term" value="F:4 iron, 4 sulfur cluster binding"/>
    <property type="evidence" value="ECO:0007669"/>
    <property type="project" value="UniProtKB-UniRule"/>
</dbReference>
<dbReference type="GO" id="GO:0046872">
    <property type="term" value="F:metal ion binding"/>
    <property type="evidence" value="ECO:0007669"/>
    <property type="project" value="UniProtKB-KW"/>
</dbReference>
<dbReference type="GO" id="GO:0070040">
    <property type="term" value="F:rRNA (adenine(2503)-C2-)-methyltransferase activity"/>
    <property type="evidence" value="ECO:0007669"/>
    <property type="project" value="UniProtKB-UniRule"/>
</dbReference>
<dbReference type="GO" id="GO:0019843">
    <property type="term" value="F:rRNA binding"/>
    <property type="evidence" value="ECO:0007669"/>
    <property type="project" value="UniProtKB-UniRule"/>
</dbReference>
<dbReference type="GO" id="GO:0002935">
    <property type="term" value="F:tRNA (adenine(37)-C2)-methyltransferase activity"/>
    <property type="evidence" value="ECO:0007669"/>
    <property type="project" value="UniProtKB-UniRule"/>
</dbReference>
<dbReference type="GO" id="GO:0000049">
    <property type="term" value="F:tRNA binding"/>
    <property type="evidence" value="ECO:0007669"/>
    <property type="project" value="UniProtKB-UniRule"/>
</dbReference>
<dbReference type="GO" id="GO:0070475">
    <property type="term" value="P:rRNA base methylation"/>
    <property type="evidence" value="ECO:0007669"/>
    <property type="project" value="UniProtKB-UniRule"/>
</dbReference>
<dbReference type="GO" id="GO:0030488">
    <property type="term" value="P:tRNA methylation"/>
    <property type="evidence" value="ECO:0007669"/>
    <property type="project" value="UniProtKB-UniRule"/>
</dbReference>
<dbReference type="CDD" id="cd01335">
    <property type="entry name" value="Radical_SAM"/>
    <property type="match status" value="1"/>
</dbReference>
<dbReference type="FunFam" id="1.10.150.530:FF:000003">
    <property type="entry name" value="Dual-specificity RNA methyltransferase RlmN"/>
    <property type="match status" value="1"/>
</dbReference>
<dbReference type="FunFam" id="3.20.20.70:FF:000008">
    <property type="entry name" value="Dual-specificity RNA methyltransferase RlmN"/>
    <property type="match status" value="1"/>
</dbReference>
<dbReference type="Gene3D" id="1.10.150.530">
    <property type="match status" value="1"/>
</dbReference>
<dbReference type="Gene3D" id="3.20.20.70">
    <property type="entry name" value="Aldolase class I"/>
    <property type="match status" value="1"/>
</dbReference>
<dbReference type="HAMAP" id="MF_01849">
    <property type="entry name" value="RNA_methyltr_RlmN"/>
    <property type="match status" value="1"/>
</dbReference>
<dbReference type="InterPro" id="IPR013785">
    <property type="entry name" value="Aldolase_TIM"/>
</dbReference>
<dbReference type="InterPro" id="IPR040072">
    <property type="entry name" value="Methyltransferase_A"/>
</dbReference>
<dbReference type="InterPro" id="IPR048641">
    <property type="entry name" value="RlmN_N"/>
</dbReference>
<dbReference type="InterPro" id="IPR027492">
    <property type="entry name" value="RNA_MTrfase_RlmN"/>
</dbReference>
<dbReference type="InterPro" id="IPR004383">
    <property type="entry name" value="rRNA_lsu_MTrfase_RlmN/Cfr"/>
</dbReference>
<dbReference type="InterPro" id="IPR007197">
    <property type="entry name" value="rSAM"/>
</dbReference>
<dbReference type="NCBIfam" id="TIGR00048">
    <property type="entry name" value="rRNA_mod_RlmN"/>
    <property type="match status" value="1"/>
</dbReference>
<dbReference type="PANTHER" id="PTHR30544">
    <property type="entry name" value="23S RRNA METHYLTRANSFERASE"/>
    <property type="match status" value="1"/>
</dbReference>
<dbReference type="PANTHER" id="PTHR30544:SF5">
    <property type="entry name" value="RADICAL SAM CORE DOMAIN-CONTAINING PROTEIN"/>
    <property type="match status" value="1"/>
</dbReference>
<dbReference type="Pfam" id="PF04055">
    <property type="entry name" value="Radical_SAM"/>
    <property type="match status" value="1"/>
</dbReference>
<dbReference type="Pfam" id="PF21016">
    <property type="entry name" value="RlmN_N"/>
    <property type="match status" value="1"/>
</dbReference>
<dbReference type="PIRSF" id="PIRSF006004">
    <property type="entry name" value="CHP00048"/>
    <property type="match status" value="1"/>
</dbReference>
<dbReference type="SFLD" id="SFLDF00275">
    <property type="entry name" value="adenosine_C2_methyltransferase"/>
    <property type="match status" value="1"/>
</dbReference>
<dbReference type="SFLD" id="SFLDG01062">
    <property type="entry name" value="methyltransferase_(Class_A)"/>
    <property type="match status" value="1"/>
</dbReference>
<dbReference type="SUPFAM" id="SSF102114">
    <property type="entry name" value="Radical SAM enzymes"/>
    <property type="match status" value="1"/>
</dbReference>
<dbReference type="PROSITE" id="PS51918">
    <property type="entry name" value="RADICAL_SAM"/>
    <property type="match status" value="1"/>
</dbReference>
<protein>
    <recommendedName>
        <fullName evidence="1">Dual-specificity RNA methyltransferase RlmN</fullName>
        <ecNumber evidence="1">2.1.1.192</ecNumber>
    </recommendedName>
    <alternativeName>
        <fullName evidence="1">23S rRNA (adenine(2503)-C(2))-methyltransferase</fullName>
    </alternativeName>
    <alternativeName>
        <fullName evidence="1">23S rRNA m2A2503 methyltransferase</fullName>
    </alternativeName>
    <alternativeName>
        <fullName evidence="1">Ribosomal RNA large subunit methyltransferase N</fullName>
    </alternativeName>
    <alternativeName>
        <fullName evidence="1">tRNA (adenine(37)-C(2))-methyltransferase</fullName>
    </alternativeName>
    <alternativeName>
        <fullName evidence="1">tRNA m2A37 methyltransferase</fullName>
    </alternativeName>
</protein>
<gene>
    <name evidence="1" type="primary">rlmN</name>
    <name type="ordered locus">Mlg_1249</name>
</gene>